<feature type="chain" id="PRO_0000155902" description="Ribonuclease Z">
    <location>
        <begin position="1"/>
        <end position="309"/>
    </location>
</feature>
<feature type="active site" description="Proton acceptor" evidence="1">
    <location>
        <position position="67"/>
    </location>
</feature>
<feature type="binding site" evidence="1">
    <location>
        <position position="63"/>
    </location>
    <ligand>
        <name>Zn(2+)</name>
        <dbReference type="ChEBI" id="CHEBI:29105"/>
        <label>1</label>
        <note>catalytic</note>
    </ligand>
</feature>
<feature type="binding site" evidence="1">
    <location>
        <position position="65"/>
    </location>
    <ligand>
        <name>Zn(2+)</name>
        <dbReference type="ChEBI" id="CHEBI:29105"/>
        <label>1</label>
        <note>catalytic</note>
    </ligand>
</feature>
<feature type="binding site" evidence="1">
    <location>
        <position position="67"/>
    </location>
    <ligand>
        <name>Zn(2+)</name>
        <dbReference type="ChEBI" id="CHEBI:29105"/>
        <label>2</label>
        <note>catalytic</note>
    </ligand>
</feature>
<feature type="binding site" evidence="1">
    <location>
        <position position="68"/>
    </location>
    <ligand>
        <name>Zn(2+)</name>
        <dbReference type="ChEBI" id="CHEBI:29105"/>
        <label>2</label>
        <note>catalytic</note>
    </ligand>
</feature>
<feature type="binding site" evidence="1">
    <location>
        <position position="145"/>
    </location>
    <ligand>
        <name>Zn(2+)</name>
        <dbReference type="ChEBI" id="CHEBI:29105"/>
        <label>1</label>
        <note>catalytic</note>
    </ligand>
</feature>
<feature type="binding site" evidence="1">
    <location>
        <position position="216"/>
    </location>
    <ligand>
        <name>Zn(2+)</name>
        <dbReference type="ChEBI" id="CHEBI:29105"/>
        <label>1</label>
        <note>catalytic</note>
    </ligand>
</feature>
<feature type="binding site" evidence="1">
    <location>
        <position position="216"/>
    </location>
    <ligand>
        <name>Zn(2+)</name>
        <dbReference type="ChEBI" id="CHEBI:29105"/>
        <label>2</label>
        <note>catalytic</note>
    </ligand>
</feature>
<feature type="binding site" evidence="1">
    <location>
        <position position="274"/>
    </location>
    <ligand>
        <name>Zn(2+)</name>
        <dbReference type="ChEBI" id="CHEBI:29105"/>
        <label>2</label>
        <note>catalytic</note>
    </ligand>
</feature>
<name>RNZ_STRA5</name>
<proteinExistence type="inferred from homology"/>
<gene>
    <name evidence="1" type="primary">rnz</name>
    <name type="ordered locus">SAG1210</name>
</gene>
<dbReference type="EC" id="3.1.26.11" evidence="1"/>
<dbReference type="EMBL" id="AE009948">
    <property type="protein sequence ID" value="AAN00092.1"/>
    <property type="molecule type" value="Genomic_DNA"/>
</dbReference>
<dbReference type="RefSeq" id="NP_688219.1">
    <property type="nucleotide sequence ID" value="NC_004116.1"/>
</dbReference>
<dbReference type="RefSeq" id="WP_000405386.1">
    <property type="nucleotide sequence ID" value="NC_004116.1"/>
</dbReference>
<dbReference type="SMR" id="Q8DZ99"/>
<dbReference type="STRING" id="208435.SAG1210"/>
<dbReference type="KEGG" id="sag:SAG1210"/>
<dbReference type="PATRIC" id="fig|208435.3.peg.1216"/>
<dbReference type="HOGENOM" id="CLU_031317_2_0_9"/>
<dbReference type="OrthoDB" id="9800940at2"/>
<dbReference type="Proteomes" id="UP000000821">
    <property type="component" value="Chromosome"/>
</dbReference>
<dbReference type="GO" id="GO:0042781">
    <property type="term" value="F:3'-tRNA processing endoribonuclease activity"/>
    <property type="evidence" value="ECO:0007669"/>
    <property type="project" value="UniProtKB-UniRule"/>
</dbReference>
<dbReference type="GO" id="GO:0008270">
    <property type="term" value="F:zinc ion binding"/>
    <property type="evidence" value="ECO:0007669"/>
    <property type="project" value="UniProtKB-UniRule"/>
</dbReference>
<dbReference type="CDD" id="cd07717">
    <property type="entry name" value="RNaseZ_ZiPD-like_MBL-fold"/>
    <property type="match status" value="1"/>
</dbReference>
<dbReference type="FunFam" id="3.60.15.10:FF:000002">
    <property type="entry name" value="Ribonuclease Z"/>
    <property type="match status" value="1"/>
</dbReference>
<dbReference type="Gene3D" id="3.60.15.10">
    <property type="entry name" value="Ribonuclease Z/Hydroxyacylglutathione hydrolase-like"/>
    <property type="match status" value="1"/>
</dbReference>
<dbReference type="HAMAP" id="MF_01818">
    <property type="entry name" value="RNase_Z_BN"/>
    <property type="match status" value="1"/>
</dbReference>
<dbReference type="InterPro" id="IPR001279">
    <property type="entry name" value="Metallo-B-lactamas"/>
</dbReference>
<dbReference type="InterPro" id="IPR036866">
    <property type="entry name" value="RibonucZ/Hydroxyglut_hydro"/>
</dbReference>
<dbReference type="InterPro" id="IPR013471">
    <property type="entry name" value="RNase_Z/BN"/>
</dbReference>
<dbReference type="NCBIfam" id="NF000801">
    <property type="entry name" value="PRK00055.1-3"/>
    <property type="match status" value="1"/>
</dbReference>
<dbReference type="NCBIfam" id="TIGR02651">
    <property type="entry name" value="RNase_Z"/>
    <property type="match status" value="1"/>
</dbReference>
<dbReference type="PANTHER" id="PTHR46018">
    <property type="entry name" value="ZINC PHOSPHODIESTERASE ELAC PROTEIN 1"/>
    <property type="match status" value="1"/>
</dbReference>
<dbReference type="PANTHER" id="PTHR46018:SF2">
    <property type="entry name" value="ZINC PHOSPHODIESTERASE ELAC PROTEIN 1"/>
    <property type="match status" value="1"/>
</dbReference>
<dbReference type="Pfam" id="PF00753">
    <property type="entry name" value="Lactamase_B"/>
    <property type="match status" value="1"/>
</dbReference>
<dbReference type="SUPFAM" id="SSF56281">
    <property type="entry name" value="Metallo-hydrolase/oxidoreductase"/>
    <property type="match status" value="1"/>
</dbReference>
<keyword id="KW-0255">Endonuclease</keyword>
<keyword id="KW-0378">Hydrolase</keyword>
<keyword id="KW-0479">Metal-binding</keyword>
<keyword id="KW-0540">Nuclease</keyword>
<keyword id="KW-1185">Reference proteome</keyword>
<keyword id="KW-0819">tRNA processing</keyword>
<keyword id="KW-0862">Zinc</keyword>
<reference key="1">
    <citation type="journal article" date="2002" name="Proc. Natl. Acad. Sci. U.S.A.">
        <title>Complete genome sequence and comparative genomic analysis of an emerging human pathogen, serotype V Streptococcus agalactiae.</title>
        <authorList>
            <person name="Tettelin H."/>
            <person name="Masignani V."/>
            <person name="Cieslewicz M.J."/>
            <person name="Eisen J.A."/>
            <person name="Peterson S.N."/>
            <person name="Wessels M.R."/>
            <person name="Paulsen I.T."/>
            <person name="Nelson K.E."/>
            <person name="Margarit I."/>
            <person name="Read T.D."/>
            <person name="Madoff L.C."/>
            <person name="Wolf A.M."/>
            <person name="Beanan M.J."/>
            <person name="Brinkac L.M."/>
            <person name="Daugherty S.C."/>
            <person name="DeBoy R.T."/>
            <person name="Durkin A.S."/>
            <person name="Kolonay J.F."/>
            <person name="Madupu R."/>
            <person name="Lewis M.R."/>
            <person name="Radune D."/>
            <person name="Fedorova N.B."/>
            <person name="Scanlan D."/>
            <person name="Khouri H.M."/>
            <person name="Mulligan S."/>
            <person name="Carty H.A."/>
            <person name="Cline R.T."/>
            <person name="Van Aken S.E."/>
            <person name="Gill J."/>
            <person name="Scarselli M."/>
            <person name="Mora M."/>
            <person name="Iacobini E.T."/>
            <person name="Brettoni C."/>
            <person name="Galli G."/>
            <person name="Mariani M."/>
            <person name="Vegni F."/>
            <person name="Maione D."/>
            <person name="Rinaudo D."/>
            <person name="Rappuoli R."/>
            <person name="Telford J.L."/>
            <person name="Kasper D.L."/>
            <person name="Grandi G."/>
            <person name="Fraser C.M."/>
        </authorList>
    </citation>
    <scope>NUCLEOTIDE SEQUENCE [LARGE SCALE GENOMIC DNA]</scope>
    <source>
        <strain>ATCC BAA-611 / 2603 V/R</strain>
    </source>
</reference>
<organism>
    <name type="scientific">Streptococcus agalactiae serotype V (strain ATCC BAA-611 / 2603 V/R)</name>
    <dbReference type="NCBI Taxonomy" id="208435"/>
    <lineage>
        <taxon>Bacteria</taxon>
        <taxon>Bacillati</taxon>
        <taxon>Bacillota</taxon>
        <taxon>Bacilli</taxon>
        <taxon>Lactobacillales</taxon>
        <taxon>Streptococcaceae</taxon>
        <taxon>Streptococcus</taxon>
    </lineage>
</organism>
<accession>Q8DZ99</accession>
<comment type="function">
    <text evidence="1">Zinc phosphodiesterase, which displays some tRNA 3'-processing endonuclease activity. Probably involved in tRNA maturation, by removing a 3'-trailer from precursor tRNA.</text>
</comment>
<comment type="catalytic activity">
    <reaction evidence="1">
        <text>Endonucleolytic cleavage of RNA, removing extra 3' nucleotides from tRNA precursor, generating 3' termini of tRNAs. A 3'-hydroxy group is left at the tRNA terminus and a 5'-phosphoryl group is left at the trailer molecule.</text>
        <dbReference type="EC" id="3.1.26.11"/>
    </reaction>
</comment>
<comment type="cofactor">
    <cofactor evidence="1">
        <name>Zn(2+)</name>
        <dbReference type="ChEBI" id="CHEBI:29105"/>
    </cofactor>
    <text evidence="1">Binds 2 Zn(2+) ions.</text>
</comment>
<comment type="subunit">
    <text evidence="1">Homodimer.</text>
</comment>
<comment type="similarity">
    <text evidence="1">Belongs to the RNase Z family.</text>
</comment>
<evidence type="ECO:0000255" key="1">
    <source>
        <dbReference type="HAMAP-Rule" id="MF_01818"/>
    </source>
</evidence>
<protein>
    <recommendedName>
        <fullName evidence="1">Ribonuclease Z</fullName>
        <shortName evidence="1">RNase Z</shortName>
        <ecNumber evidence="1">3.1.26.11</ecNumber>
    </recommendedName>
    <alternativeName>
        <fullName evidence="1">tRNA 3 endonuclease</fullName>
    </alternativeName>
    <alternativeName>
        <fullName evidence="1">tRNase Z</fullName>
    </alternativeName>
</protein>
<sequence>MEIQFLGTGAGQPAKARNVSSLVLKLLDEINEVWMFDCGEGTQRQILETTIKPRKVKKIFITHMHGDHVFGLPGFLSSRAFQANEEQTDLDIYGPVGIKSFVMTALRTSGSRLPYRIHFHEFDESSLGKIMETDKFTVYAEKLDHTIFCMGYRVVQKDLEGTLDAEALKLAGVPFGPLFGKVKNGENVTLEDGREIIAKDYISEPKKGKVITILGDTRKTDASIRLALGADVLVHESTYGKGDERIAKSHGHSTNMQAADIAKQANAKRLLLNHVSARFMGRDCWQMEEDAKTIFSNTHLVRDLEEVGI</sequence>